<sequence>MAPSSSPLRTTSETDEKYANVKWEELGFALTPIDYMYVAKCRQGESFTQGKIVPYGDISISPCSPILNYGQGLFEGLKAYRTEDDRIRIFRPDQNALRMQTGAERLCMTPPTLEQFVEAVKQTVLANKKWVPPPGKGTLYIRPLLLGSGATLGVAPAPEYTFLIYASPVGDYHKVSSGLNLKVDHKYHRAHSGGTGGVKSCTNYSPVVKSLLEAKSAGFSDVLFLDAATGRNIEELTACNIFIVKGNIVSTPPTSGTILPGVTRKSISELAHDIGYQVEERDVSVDELLEAEEVFCTGTAVVVKAVETVTFHDKKVKYRTGEAALSTKLHSMLTNIQMGVVEDKKGWMVDIDPCQG</sequence>
<dbReference type="EC" id="2.6.1.42"/>
<dbReference type="EMBL" id="AJ312747">
    <property type="protein sequence ID" value="CAC37393.1"/>
    <property type="molecule type" value="mRNA"/>
</dbReference>
<dbReference type="EMBL" id="AC015445">
    <property type="protein sequence ID" value="AAF76437.1"/>
    <property type="molecule type" value="Genomic_DNA"/>
</dbReference>
<dbReference type="EMBL" id="CP002684">
    <property type="protein sequence ID" value="AEE32516.1"/>
    <property type="molecule type" value="Genomic_DNA"/>
</dbReference>
<dbReference type="EMBL" id="AY088621">
    <property type="protein sequence ID" value="AAM66943.1"/>
    <property type="molecule type" value="mRNA"/>
</dbReference>
<dbReference type="EMBL" id="Z26805">
    <property type="protein sequence ID" value="CAA81418.1"/>
    <property type="molecule type" value="mRNA"/>
</dbReference>
<dbReference type="PIR" id="D96537">
    <property type="entry name" value="D96537"/>
</dbReference>
<dbReference type="RefSeq" id="NP_175431.1">
    <property type="nucleotide sequence ID" value="NM_103897.4"/>
</dbReference>
<dbReference type="SMR" id="Q9LPM9"/>
<dbReference type="FunCoup" id="Q9LPM9">
    <property type="interactions" value="1795"/>
</dbReference>
<dbReference type="STRING" id="3702.Q9LPM9"/>
<dbReference type="iPTMnet" id="Q9LPM9"/>
<dbReference type="PaxDb" id="3702-AT1G50110.1"/>
<dbReference type="ProteomicsDB" id="240776"/>
<dbReference type="EnsemblPlants" id="AT1G50110.1">
    <property type="protein sequence ID" value="AT1G50110.1"/>
    <property type="gene ID" value="AT1G50110"/>
</dbReference>
<dbReference type="GeneID" id="841433"/>
<dbReference type="Gramene" id="AT1G50110.1">
    <property type="protein sequence ID" value="AT1G50110.1"/>
    <property type="gene ID" value="AT1G50110"/>
</dbReference>
<dbReference type="KEGG" id="ath:AT1G50110"/>
<dbReference type="Araport" id="AT1G50110"/>
<dbReference type="TAIR" id="AT1G50110">
    <property type="gene designation" value="BCAT6"/>
</dbReference>
<dbReference type="eggNOG" id="KOG0975">
    <property type="taxonomic scope" value="Eukaryota"/>
</dbReference>
<dbReference type="HOGENOM" id="CLU_031922_4_0_1"/>
<dbReference type="InParanoid" id="Q9LPM9"/>
<dbReference type="OMA" id="CHEVKQV"/>
<dbReference type="PhylomeDB" id="Q9LPM9"/>
<dbReference type="BioCyc" id="ARA:AT1G50110-MONOMER"/>
<dbReference type="BRENDA" id="2.6.1.42">
    <property type="organism ID" value="399"/>
</dbReference>
<dbReference type="UniPathway" id="UPA00047">
    <property type="reaction ID" value="UER00058"/>
</dbReference>
<dbReference type="UniPathway" id="UPA00048">
    <property type="reaction ID" value="UER00073"/>
</dbReference>
<dbReference type="UniPathway" id="UPA00049">
    <property type="reaction ID" value="UER00062"/>
</dbReference>
<dbReference type="PRO" id="PR:Q9LPM9"/>
<dbReference type="Proteomes" id="UP000006548">
    <property type="component" value="Chromosome 1"/>
</dbReference>
<dbReference type="ExpressionAtlas" id="Q9LPM9">
    <property type="expression patterns" value="baseline and differential"/>
</dbReference>
<dbReference type="GO" id="GO:0005829">
    <property type="term" value="C:cytosol"/>
    <property type="evidence" value="ECO:0000314"/>
    <property type="project" value="TAIR"/>
</dbReference>
<dbReference type="GO" id="GO:0052656">
    <property type="term" value="F:L-isoleucine-2-oxoglutarate transaminase activity"/>
    <property type="evidence" value="ECO:0000314"/>
    <property type="project" value="TAIR"/>
</dbReference>
<dbReference type="GO" id="GO:0052654">
    <property type="term" value="F:L-leucine-2-oxoglutarate transaminase activity"/>
    <property type="evidence" value="ECO:0000314"/>
    <property type="project" value="TAIR"/>
</dbReference>
<dbReference type="GO" id="GO:0052655">
    <property type="term" value="F:L-valine-2-oxoglutarate transaminase activity"/>
    <property type="evidence" value="ECO:0000314"/>
    <property type="project" value="TAIR"/>
</dbReference>
<dbReference type="GO" id="GO:0010326">
    <property type="term" value="F:methionine-oxo-acid transaminase activity"/>
    <property type="evidence" value="ECO:0000314"/>
    <property type="project" value="TAIR"/>
</dbReference>
<dbReference type="GO" id="GO:0033506">
    <property type="term" value="P:glucosinolate biosynthetic process from homomethionine"/>
    <property type="evidence" value="ECO:0000316"/>
    <property type="project" value="TAIR"/>
</dbReference>
<dbReference type="GO" id="GO:0009097">
    <property type="term" value="P:isoleucine biosynthetic process"/>
    <property type="evidence" value="ECO:0007669"/>
    <property type="project" value="UniProtKB-UniPathway"/>
</dbReference>
<dbReference type="GO" id="GO:0009098">
    <property type="term" value="P:L-leucine biosynthetic process"/>
    <property type="evidence" value="ECO:0007669"/>
    <property type="project" value="UniProtKB-UniPathway"/>
</dbReference>
<dbReference type="GO" id="GO:0071267">
    <property type="term" value="P:L-methionine salvage"/>
    <property type="evidence" value="ECO:0000316"/>
    <property type="project" value="TAIR"/>
</dbReference>
<dbReference type="GO" id="GO:0009099">
    <property type="term" value="P:L-valine biosynthetic process"/>
    <property type="evidence" value="ECO:0007669"/>
    <property type="project" value="UniProtKB-UniPathway"/>
</dbReference>
<dbReference type="CDD" id="cd01557">
    <property type="entry name" value="BCAT_beta_family"/>
    <property type="match status" value="1"/>
</dbReference>
<dbReference type="FunFam" id="3.20.10.10:FF:000003">
    <property type="entry name" value="Branched-chain-amino-acid aminotransferase"/>
    <property type="match status" value="1"/>
</dbReference>
<dbReference type="FunFam" id="3.30.470.10:FF:000003">
    <property type="entry name" value="Branched-chain-amino-acid aminotransferase"/>
    <property type="match status" value="1"/>
</dbReference>
<dbReference type="Gene3D" id="3.30.470.10">
    <property type="match status" value="1"/>
</dbReference>
<dbReference type="Gene3D" id="3.20.10.10">
    <property type="entry name" value="D-amino Acid Aminotransferase, subunit A, domain 2"/>
    <property type="match status" value="1"/>
</dbReference>
<dbReference type="InterPro" id="IPR001544">
    <property type="entry name" value="Aminotrans_IV"/>
</dbReference>
<dbReference type="InterPro" id="IPR018300">
    <property type="entry name" value="Aminotrans_IV_CS"/>
</dbReference>
<dbReference type="InterPro" id="IPR036038">
    <property type="entry name" value="Aminotransferase-like"/>
</dbReference>
<dbReference type="InterPro" id="IPR005786">
    <property type="entry name" value="B_amino_transII"/>
</dbReference>
<dbReference type="InterPro" id="IPR043132">
    <property type="entry name" value="BCAT-like_C"/>
</dbReference>
<dbReference type="InterPro" id="IPR043131">
    <property type="entry name" value="BCAT-like_N"/>
</dbReference>
<dbReference type="InterPro" id="IPR033939">
    <property type="entry name" value="BCAT_family"/>
</dbReference>
<dbReference type="NCBIfam" id="TIGR01123">
    <property type="entry name" value="ilvE_II"/>
    <property type="match status" value="1"/>
</dbReference>
<dbReference type="NCBIfam" id="NF009897">
    <property type="entry name" value="PRK13357.1"/>
    <property type="match status" value="1"/>
</dbReference>
<dbReference type="PANTHER" id="PTHR42825">
    <property type="entry name" value="AMINO ACID AMINOTRANSFERASE"/>
    <property type="match status" value="1"/>
</dbReference>
<dbReference type="PANTHER" id="PTHR42825:SF11">
    <property type="entry name" value="BRANCHED-CHAIN-AMINO-ACID AMINOTRANSFERASE 6"/>
    <property type="match status" value="1"/>
</dbReference>
<dbReference type="Pfam" id="PF01063">
    <property type="entry name" value="Aminotran_4"/>
    <property type="match status" value="1"/>
</dbReference>
<dbReference type="PIRSF" id="PIRSF006468">
    <property type="entry name" value="BCAT1"/>
    <property type="match status" value="1"/>
</dbReference>
<dbReference type="SUPFAM" id="SSF56752">
    <property type="entry name" value="D-aminoacid aminotransferase-like PLP-dependent enzymes"/>
    <property type="match status" value="1"/>
</dbReference>
<dbReference type="PROSITE" id="PS00770">
    <property type="entry name" value="AA_TRANSFER_CLASS_4"/>
    <property type="match status" value="1"/>
</dbReference>
<comment type="function">
    <text evidence="1">Converts 2-oxo acids to branched-chain amino acids. Acts on leucine, isoleucine and valine (By similarity).</text>
</comment>
<comment type="catalytic activity">
    <reaction>
        <text>L-leucine + 2-oxoglutarate = 4-methyl-2-oxopentanoate + L-glutamate</text>
        <dbReference type="Rhea" id="RHEA:18321"/>
        <dbReference type="ChEBI" id="CHEBI:16810"/>
        <dbReference type="ChEBI" id="CHEBI:17865"/>
        <dbReference type="ChEBI" id="CHEBI:29985"/>
        <dbReference type="ChEBI" id="CHEBI:57427"/>
        <dbReference type="EC" id="2.6.1.42"/>
    </reaction>
</comment>
<comment type="catalytic activity">
    <reaction>
        <text>L-isoleucine + 2-oxoglutarate = (S)-3-methyl-2-oxopentanoate + L-glutamate</text>
        <dbReference type="Rhea" id="RHEA:24801"/>
        <dbReference type="ChEBI" id="CHEBI:16810"/>
        <dbReference type="ChEBI" id="CHEBI:29985"/>
        <dbReference type="ChEBI" id="CHEBI:35146"/>
        <dbReference type="ChEBI" id="CHEBI:58045"/>
        <dbReference type="EC" id="2.6.1.42"/>
    </reaction>
</comment>
<comment type="catalytic activity">
    <reaction>
        <text>L-valine + 2-oxoglutarate = 3-methyl-2-oxobutanoate + L-glutamate</text>
        <dbReference type="Rhea" id="RHEA:24813"/>
        <dbReference type="ChEBI" id="CHEBI:11851"/>
        <dbReference type="ChEBI" id="CHEBI:16810"/>
        <dbReference type="ChEBI" id="CHEBI:29985"/>
        <dbReference type="ChEBI" id="CHEBI:57762"/>
        <dbReference type="EC" id="2.6.1.42"/>
    </reaction>
</comment>
<comment type="cofactor">
    <cofactor>
        <name>pyridoxal 5'-phosphate</name>
        <dbReference type="ChEBI" id="CHEBI:597326"/>
    </cofactor>
</comment>
<comment type="pathway">
    <text>Amino-acid biosynthesis; L-isoleucine biosynthesis; L-isoleucine from 2-oxobutanoate: step 4/4.</text>
</comment>
<comment type="pathway">
    <text>Amino-acid biosynthesis; L-leucine biosynthesis; L-leucine from 3-methyl-2-oxobutanoate: step 4/4.</text>
</comment>
<comment type="pathway">
    <text>Amino-acid biosynthesis; L-valine biosynthesis; L-valine from pyruvate: step 4/4.</text>
</comment>
<comment type="subcellular location">
    <subcellularLocation>
        <location>Cytoplasm</location>
    </subcellularLocation>
</comment>
<comment type="similarity">
    <text evidence="2">Belongs to the class-IV pyridoxal-phosphate-dependent aminotransferase family.</text>
</comment>
<organism>
    <name type="scientific">Arabidopsis thaliana</name>
    <name type="common">Mouse-ear cress</name>
    <dbReference type="NCBI Taxonomy" id="3702"/>
    <lineage>
        <taxon>Eukaryota</taxon>
        <taxon>Viridiplantae</taxon>
        <taxon>Streptophyta</taxon>
        <taxon>Embryophyta</taxon>
        <taxon>Tracheophyta</taxon>
        <taxon>Spermatophyta</taxon>
        <taxon>Magnoliopsida</taxon>
        <taxon>eudicotyledons</taxon>
        <taxon>Gunneridae</taxon>
        <taxon>Pentapetalae</taxon>
        <taxon>rosids</taxon>
        <taxon>malvids</taxon>
        <taxon>Brassicales</taxon>
        <taxon>Brassicaceae</taxon>
        <taxon>Camelineae</taxon>
        <taxon>Arabidopsis</taxon>
    </lineage>
</organism>
<accession>Q9LPM9</accession>
<accession>Q42148</accession>
<accession>Q8L961</accession>
<reference key="1">
    <citation type="journal article" date="2002" name="Plant Physiol.">
        <title>The branched-chain amino acid transaminase gene family in Arabidopsis encodes plastid and mitochondrial proteins.</title>
        <authorList>
            <person name="Diebold R."/>
            <person name="Schuster J."/>
            <person name="Daschner K."/>
            <person name="Binder S."/>
        </authorList>
    </citation>
    <scope>NUCLEOTIDE SEQUENCE [MRNA]</scope>
    <scope>CHARACTERIZATION</scope>
    <source>
        <strain>cv. Columbia</strain>
    </source>
</reference>
<reference key="2">
    <citation type="journal article" date="2000" name="Nature">
        <title>Sequence and analysis of chromosome 1 of the plant Arabidopsis thaliana.</title>
        <authorList>
            <person name="Theologis A."/>
            <person name="Ecker J.R."/>
            <person name="Palm C.J."/>
            <person name="Federspiel N.A."/>
            <person name="Kaul S."/>
            <person name="White O."/>
            <person name="Alonso J."/>
            <person name="Altafi H."/>
            <person name="Araujo R."/>
            <person name="Bowman C.L."/>
            <person name="Brooks S.Y."/>
            <person name="Buehler E."/>
            <person name="Chan A."/>
            <person name="Chao Q."/>
            <person name="Chen H."/>
            <person name="Cheuk R.F."/>
            <person name="Chin C.W."/>
            <person name="Chung M.K."/>
            <person name="Conn L."/>
            <person name="Conway A.B."/>
            <person name="Conway A.R."/>
            <person name="Creasy T.H."/>
            <person name="Dewar K."/>
            <person name="Dunn P."/>
            <person name="Etgu P."/>
            <person name="Feldblyum T.V."/>
            <person name="Feng J.-D."/>
            <person name="Fong B."/>
            <person name="Fujii C.Y."/>
            <person name="Gill J.E."/>
            <person name="Goldsmith A.D."/>
            <person name="Haas B."/>
            <person name="Hansen N.F."/>
            <person name="Hughes B."/>
            <person name="Huizar L."/>
            <person name="Hunter J.L."/>
            <person name="Jenkins J."/>
            <person name="Johnson-Hopson C."/>
            <person name="Khan S."/>
            <person name="Khaykin E."/>
            <person name="Kim C.J."/>
            <person name="Koo H.L."/>
            <person name="Kremenetskaia I."/>
            <person name="Kurtz D.B."/>
            <person name="Kwan A."/>
            <person name="Lam B."/>
            <person name="Langin-Hooper S."/>
            <person name="Lee A."/>
            <person name="Lee J.M."/>
            <person name="Lenz C.A."/>
            <person name="Li J.H."/>
            <person name="Li Y.-P."/>
            <person name="Lin X."/>
            <person name="Liu S.X."/>
            <person name="Liu Z.A."/>
            <person name="Luros J.S."/>
            <person name="Maiti R."/>
            <person name="Marziali A."/>
            <person name="Militscher J."/>
            <person name="Miranda M."/>
            <person name="Nguyen M."/>
            <person name="Nierman W.C."/>
            <person name="Osborne B.I."/>
            <person name="Pai G."/>
            <person name="Peterson J."/>
            <person name="Pham P.K."/>
            <person name="Rizzo M."/>
            <person name="Rooney T."/>
            <person name="Rowley D."/>
            <person name="Sakano H."/>
            <person name="Salzberg S.L."/>
            <person name="Schwartz J.R."/>
            <person name="Shinn P."/>
            <person name="Southwick A.M."/>
            <person name="Sun H."/>
            <person name="Tallon L.J."/>
            <person name="Tambunga G."/>
            <person name="Toriumi M.J."/>
            <person name="Town C.D."/>
            <person name="Utterback T."/>
            <person name="Van Aken S."/>
            <person name="Vaysberg M."/>
            <person name="Vysotskaia V.S."/>
            <person name="Walker M."/>
            <person name="Wu D."/>
            <person name="Yu G."/>
            <person name="Fraser C.M."/>
            <person name="Venter J.C."/>
            <person name="Davis R.W."/>
        </authorList>
    </citation>
    <scope>NUCLEOTIDE SEQUENCE [LARGE SCALE GENOMIC DNA]</scope>
    <source>
        <strain>cv. Columbia</strain>
    </source>
</reference>
<reference key="3">
    <citation type="journal article" date="2017" name="Plant J.">
        <title>Araport11: a complete reannotation of the Arabidopsis thaliana reference genome.</title>
        <authorList>
            <person name="Cheng C.Y."/>
            <person name="Krishnakumar V."/>
            <person name="Chan A.P."/>
            <person name="Thibaud-Nissen F."/>
            <person name="Schobel S."/>
            <person name="Town C.D."/>
        </authorList>
    </citation>
    <scope>GENOME REANNOTATION</scope>
    <source>
        <strain>cv. Columbia</strain>
    </source>
</reference>
<reference key="4">
    <citation type="submission" date="2002-03" db="EMBL/GenBank/DDBJ databases">
        <title>Full-length cDNA from Arabidopsis thaliana.</title>
        <authorList>
            <person name="Brover V.V."/>
            <person name="Troukhan M.E."/>
            <person name="Alexandrov N.A."/>
            <person name="Lu Y.-P."/>
            <person name="Flavell R.B."/>
            <person name="Feldmann K.A."/>
        </authorList>
    </citation>
    <scope>NUCLEOTIDE SEQUENCE [LARGE SCALE MRNA]</scope>
</reference>
<reference key="5">
    <citation type="journal article" date="1996" name="Plant J.">
        <title>Further progress towards a catalogue of all Arabidopsis genes: analysis of a set of 5000 non-redundant ESTs.</title>
        <authorList>
            <person name="Cooke R."/>
            <person name="Raynal M."/>
            <person name="Laudie M."/>
            <person name="Grellet F."/>
            <person name="Delseny M."/>
            <person name="Morris P.-C."/>
            <person name="Guerrier D."/>
            <person name="Giraudat J."/>
            <person name="Quigley F."/>
            <person name="Clabault G."/>
            <person name="Li Y.-F."/>
            <person name="Mache R."/>
            <person name="Krivitzky M."/>
            <person name="Gy I.J.-J."/>
            <person name="Kreis M."/>
            <person name="Lecharny A."/>
            <person name="Parmentier Y."/>
            <person name="Marbach J."/>
            <person name="Fleck J."/>
            <person name="Clement B."/>
            <person name="Philipps G."/>
            <person name="Herve C."/>
            <person name="Bardet C."/>
            <person name="Tremousaygue D."/>
            <person name="Lescure B."/>
            <person name="Lacomme C."/>
            <person name="Roby D."/>
            <person name="Jourjon M.-F."/>
            <person name="Chabrier P."/>
            <person name="Charpenteau J.-L."/>
            <person name="Desprez T."/>
            <person name="Amselem J."/>
            <person name="Chiapello H."/>
            <person name="Hoefte H."/>
        </authorList>
    </citation>
    <scope>NUCLEOTIDE SEQUENCE [LARGE SCALE MRNA] OF 16-140</scope>
    <source>
        <strain>cv. Columbia</strain>
    </source>
</reference>
<proteinExistence type="evidence at protein level"/>
<gene>
    <name type="primary">BCAT6</name>
    <name type="ordered locus">At1g50110</name>
    <name type="ORF">F2J10.4</name>
</gene>
<evidence type="ECO:0000250" key="1"/>
<evidence type="ECO:0000305" key="2"/>
<feature type="chain" id="PRO_0000103298" description="Branched-chain-amino-acid aminotransferase 6">
    <location>
        <begin position="1"/>
        <end position="356"/>
    </location>
</feature>
<feature type="modified residue" description="N6-(pyridoxal phosphate)lysine" evidence="1">
    <location>
        <position position="199"/>
    </location>
</feature>
<feature type="sequence conflict" description="In Ref. 5; CAA81418." evidence="2" ref="5">
    <original>GKGTLY</original>
    <variation>VKELCI</variation>
    <location>
        <begin position="135"/>
        <end position="140"/>
    </location>
</feature>
<feature type="sequence conflict" description="In Ref. 4; AAM66943." evidence="2" ref="4">
    <original>L</original>
    <variation>P</variation>
    <location>
        <position position="145"/>
    </location>
</feature>
<protein>
    <recommendedName>
        <fullName>Branched-chain-amino-acid aminotransferase 6</fullName>
        <shortName>Atbcat-6</shortName>
        <ecNumber>2.6.1.42</ecNumber>
    </recommendedName>
</protein>
<keyword id="KW-0028">Amino-acid biosynthesis</keyword>
<keyword id="KW-0032">Aminotransferase</keyword>
<keyword id="KW-0100">Branched-chain amino acid biosynthesis</keyword>
<keyword id="KW-0963">Cytoplasm</keyword>
<keyword id="KW-0663">Pyridoxal phosphate</keyword>
<keyword id="KW-1185">Reference proteome</keyword>
<keyword id="KW-0808">Transferase</keyword>
<name>BCAT6_ARATH</name>